<sequence length="591" mass="64020">MGKLLFGKLVFKKSLFLLSGMSSLAVFLTACGATKIFDSSVQLLVSDNFSTLADKSFSQMSYEGIRSFFKKSKGVDLPEADSSQLQEGNGLWKRPGFTLSDRIATFNNIKNDGSDVIVATGFNQQESLQAITSDDIRFQSDKESLAKTGFIFVDGAIEKEFNKRNGVPQFKSTPTNISSVAFRSDDGSFLTGVATAVYLNLNQEYFLDKSGWSTNSSNNNELTVSGFVGIALPSTLSFLNGFRLGIAYFNEVIYKHLSDAQDSSAQVTTSKQTVLKQLQVANGEKRIKKIKWISPKQGSDGETINIQDHQSGSFSDTEPRAITIANNLIDKGVNAIIPIAGPQTNLVVTQIARRQAHTAVIGVDSAQELLDINIDAPNKDKLKMGNKKIIPFSSIKALDVAVESILSTLEKGSSQNGYQGFGYNNIGTVKNNSVGVSEAGYEFLIDPVFWKNTSSMQAMSLSASLKANAASSSDNKKKLSEVATKKNENGSTKNGSNDIIDKYAKLLTKSSSSTSMRNGSSDSNQQNFKTTDNDGDWTIVGDELGKYKSSELPIFTGSSSYPTFQTEAQNVLDGGANVASTQGFKWSFKQI</sequence>
<evidence type="ECO:0000255" key="1">
    <source>
        <dbReference type="PROSITE-ProRule" id="PRU00303"/>
    </source>
</evidence>
<evidence type="ECO:0000256" key="2">
    <source>
        <dbReference type="SAM" id="MobiDB-lite"/>
    </source>
</evidence>
<evidence type="ECO:0000305" key="3"/>
<keyword id="KW-1003">Cell membrane</keyword>
<keyword id="KW-0449">Lipoprotein</keyword>
<keyword id="KW-0472">Membrane</keyword>
<keyword id="KW-0564">Palmitate</keyword>
<keyword id="KW-1185">Reference proteome</keyword>
<keyword id="KW-0732">Signal</keyword>
<organism>
    <name type="scientific">Mycoplasma genitalium (strain ATCC 33530 / DSM 19775 / NCTC 10195 / G37)</name>
    <name type="common">Mycoplasmoides genitalium</name>
    <dbReference type="NCBI Taxonomy" id="243273"/>
    <lineage>
        <taxon>Bacteria</taxon>
        <taxon>Bacillati</taxon>
        <taxon>Mycoplasmatota</taxon>
        <taxon>Mycoplasmoidales</taxon>
        <taxon>Mycoplasmoidaceae</taxon>
        <taxon>Mycoplasmoides</taxon>
    </lineage>
</organism>
<reference key="1">
    <citation type="journal article" date="1995" name="Science">
        <title>The minimal gene complement of Mycoplasma genitalium.</title>
        <authorList>
            <person name="Fraser C.M."/>
            <person name="Gocayne J.D."/>
            <person name="White O."/>
            <person name="Adams M.D."/>
            <person name="Clayton R.A."/>
            <person name="Fleischmann R.D."/>
            <person name="Bult C.J."/>
            <person name="Kerlavage A.R."/>
            <person name="Sutton G.G."/>
            <person name="Kelley J.M."/>
            <person name="Fritchman J.L."/>
            <person name="Weidman J.F."/>
            <person name="Small K.V."/>
            <person name="Sandusky M."/>
            <person name="Fuhrmann J.L."/>
            <person name="Nguyen D.T."/>
            <person name="Utterback T.R."/>
            <person name="Saudek D.M."/>
            <person name="Phillips C.A."/>
            <person name="Merrick J.M."/>
            <person name="Tomb J.-F."/>
            <person name="Dougherty B.A."/>
            <person name="Bott K.F."/>
            <person name="Hu P.-C."/>
            <person name="Lucier T.S."/>
            <person name="Peterson S.N."/>
            <person name="Smith H.O."/>
            <person name="Hutchison C.A. III"/>
            <person name="Venter J.C."/>
        </authorList>
    </citation>
    <scope>NUCLEOTIDE SEQUENCE [LARGE SCALE GENOMIC DNA]</scope>
    <source>
        <strain>ATCC 33530 / DSM 19775 / NCTC 10195 / G37</strain>
    </source>
</reference>
<reference key="2">
    <citation type="journal article" date="1993" name="J. Bacteriol.">
        <title>A survey of the Mycoplasma genitalium genome by using random sequencing.</title>
        <authorList>
            <person name="Peterson S.N."/>
            <person name="Hu P.-C."/>
            <person name="Bott K.F."/>
            <person name="Hutchison C.A. III"/>
        </authorList>
    </citation>
    <scope>NUCLEOTIDE SEQUENCE [GENOMIC DNA] OF 448-517</scope>
    <source>
        <strain>ATCC 33530 / DSM 19775 / NCTC 10195 / G37</strain>
    </source>
</reference>
<gene>
    <name type="ordered locus">MG040</name>
</gene>
<dbReference type="EMBL" id="L43967">
    <property type="protein sequence ID" value="AAC71256.1"/>
    <property type="molecule type" value="Genomic_DNA"/>
</dbReference>
<dbReference type="EMBL" id="U02125">
    <property type="protein sequence ID" value="AAD12400.1"/>
    <property type="molecule type" value="Genomic_DNA"/>
</dbReference>
<dbReference type="PIR" id="D64204">
    <property type="entry name" value="D64204"/>
</dbReference>
<dbReference type="RefSeq" id="WP_009885703.1">
    <property type="nucleotide sequence ID" value="NC_000908.2"/>
</dbReference>
<dbReference type="SMR" id="P47286"/>
<dbReference type="STRING" id="243273.MG_040"/>
<dbReference type="GeneID" id="88282155"/>
<dbReference type="KEGG" id="mge:MG_040"/>
<dbReference type="eggNOG" id="COG1744">
    <property type="taxonomic scope" value="Bacteria"/>
</dbReference>
<dbReference type="HOGENOM" id="CLU_461397_0_0_14"/>
<dbReference type="InParanoid" id="P47286"/>
<dbReference type="OrthoDB" id="397060at2"/>
<dbReference type="BioCyc" id="MGEN243273:G1GJ2-40-MONOMER"/>
<dbReference type="Proteomes" id="UP000000807">
    <property type="component" value="Chromosome"/>
</dbReference>
<dbReference type="GO" id="GO:0005886">
    <property type="term" value="C:plasma membrane"/>
    <property type="evidence" value="ECO:0007669"/>
    <property type="project" value="UniProtKB-SubCell"/>
</dbReference>
<dbReference type="Gene3D" id="3.40.50.2300">
    <property type="match status" value="1"/>
</dbReference>
<dbReference type="InterPro" id="IPR050957">
    <property type="entry name" value="BMP_lipoprotein"/>
</dbReference>
<dbReference type="InterPro" id="IPR003760">
    <property type="entry name" value="PnrA-like"/>
</dbReference>
<dbReference type="PANTHER" id="PTHR34296:SF2">
    <property type="entry name" value="ABC TRANSPORTER GUANOSINE-BINDING PROTEIN NUPN"/>
    <property type="match status" value="1"/>
</dbReference>
<dbReference type="PANTHER" id="PTHR34296">
    <property type="entry name" value="TRANSCRIPTIONAL ACTIVATOR PROTEIN MED"/>
    <property type="match status" value="1"/>
</dbReference>
<dbReference type="Pfam" id="PF02608">
    <property type="entry name" value="Bmp"/>
    <property type="match status" value="1"/>
</dbReference>
<dbReference type="PROSITE" id="PS51257">
    <property type="entry name" value="PROKAR_LIPOPROTEIN"/>
    <property type="match status" value="1"/>
</dbReference>
<feature type="signal peptide" evidence="1">
    <location>
        <begin position="1"/>
        <end position="30"/>
    </location>
</feature>
<feature type="chain" id="PRO_0000014022" description="Uncharacterized lipoprotein MG040">
    <location>
        <begin position="31"/>
        <end position="591"/>
    </location>
</feature>
<feature type="region of interest" description="Disordered" evidence="2">
    <location>
        <begin position="476"/>
        <end position="497"/>
    </location>
</feature>
<feature type="region of interest" description="Disordered" evidence="2">
    <location>
        <begin position="510"/>
        <end position="535"/>
    </location>
</feature>
<feature type="compositionally biased region" description="Basic and acidic residues" evidence="2">
    <location>
        <begin position="476"/>
        <end position="488"/>
    </location>
</feature>
<feature type="compositionally biased region" description="Low complexity" evidence="2">
    <location>
        <begin position="510"/>
        <end position="523"/>
    </location>
</feature>
<feature type="lipid moiety-binding region" description="N-palmitoyl cysteine" evidence="1">
    <location>
        <position position="31"/>
    </location>
</feature>
<feature type="lipid moiety-binding region" description="S-diacylglycerol cysteine" evidence="1">
    <location>
        <position position="31"/>
    </location>
</feature>
<name>Y040_MYCGE</name>
<proteinExistence type="inferred from homology"/>
<protein>
    <recommendedName>
        <fullName>Uncharacterized lipoprotein MG040</fullName>
    </recommendedName>
</protein>
<accession>P47286</accession>
<comment type="subcellular location">
    <subcellularLocation>
        <location evidence="1">Cell membrane</location>
        <topology evidence="1">Lipid-anchor</topology>
    </subcellularLocation>
</comment>
<comment type="similarity">
    <text evidence="3">To T.pallidum TmpC.</text>
</comment>